<reference key="1">
    <citation type="journal article" date="2000" name="Proc. Natl. Acad. Sci. U.S.A.">
        <title>Archaeal adaptation to higher temperatures revealed by genomic sequence of Thermoplasma volcanium.</title>
        <authorList>
            <person name="Kawashima T."/>
            <person name="Amano N."/>
            <person name="Koike H."/>
            <person name="Makino S."/>
            <person name="Higuchi S."/>
            <person name="Kawashima-Ohya Y."/>
            <person name="Watanabe K."/>
            <person name="Yamazaki M."/>
            <person name="Kanehori K."/>
            <person name="Kawamoto T."/>
            <person name="Nunoshiba T."/>
            <person name="Yamamoto Y."/>
            <person name="Aramaki H."/>
            <person name="Makino K."/>
            <person name="Suzuki M."/>
        </authorList>
    </citation>
    <scope>NUCLEOTIDE SEQUENCE [LARGE SCALE GENOMIC DNA]</scope>
    <source>
        <strain>ATCC 51530 / DSM 4299 / JCM 9571 / NBRC 15438 / GSS1</strain>
    </source>
</reference>
<name>HEM1_THEVO</name>
<proteinExistence type="evidence at protein level"/>
<gene>
    <name evidence="1" type="primary">hemA</name>
    <name type="ordered locus">TV0590</name>
    <name type="ORF">TVG0579613</name>
</gene>
<feature type="chain" id="PRO_0000114113" description="Glutamyl-tRNA reductase">
    <location>
        <begin position="1"/>
        <end position="409"/>
    </location>
</feature>
<feature type="active site" description="Nucleophile" evidence="1">
    <location>
        <position position="49"/>
    </location>
</feature>
<feature type="binding site" evidence="1">
    <location>
        <begin position="48"/>
        <end position="51"/>
    </location>
    <ligand>
        <name>substrate</name>
    </ligand>
</feature>
<feature type="binding site" evidence="1">
    <location>
        <position position="89"/>
    </location>
    <ligand>
        <name>substrate</name>
    </ligand>
</feature>
<feature type="binding site" evidence="1">
    <location>
        <begin position="94"/>
        <end position="96"/>
    </location>
    <ligand>
        <name>substrate</name>
    </ligand>
</feature>
<feature type="binding site" evidence="1">
    <location>
        <position position="100"/>
    </location>
    <ligand>
        <name>substrate</name>
    </ligand>
</feature>
<feature type="binding site" evidence="1">
    <location>
        <begin position="165"/>
        <end position="170"/>
    </location>
    <ligand>
        <name>NADP(+)</name>
        <dbReference type="ChEBI" id="CHEBI:58349"/>
    </ligand>
</feature>
<feature type="site" description="Important for activity" evidence="1">
    <location>
        <position position="79"/>
    </location>
</feature>
<feature type="helix" evidence="2">
    <location>
        <begin position="145"/>
        <end position="156"/>
    </location>
</feature>
<feature type="strand" evidence="2">
    <location>
        <begin position="160"/>
        <end position="164"/>
    </location>
</feature>
<feature type="helix" evidence="2">
    <location>
        <begin position="168"/>
        <end position="173"/>
    </location>
</feature>
<feature type="helix" evidence="2">
    <location>
        <begin position="174"/>
        <end position="176"/>
    </location>
</feature>
<feature type="turn" evidence="2">
    <location>
        <begin position="179"/>
        <end position="181"/>
    </location>
</feature>
<feature type="strand" evidence="2">
    <location>
        <begin position="183"/>
        <end position="189"/>
    </location>
</feature>
<feature type="helix" evidence="2">
    <location>
        <begin position="191"/>
        <end position="201"/>
    </location>
</feature>
<feature type="strand" evidence="2">
    <location>
        <begin position="204"/>
        <end position="207"/>
    </location>
</feature>
<feature type="helix" evidence="2">
    <location>
        <begin position="211"/>
        <end position="216"/>
    </location>
</feature>
<feature type="strand" evidence="2">
    <location>
        <begin position="219"/>
        <end position="223"/>
    </location>
</feature>
<feature type="helix" evidence="2">
    <location>
        <begin position="234"/>
        <end position="236"/>
    </location>
</feature>
<feature type="strand" evidence="2">
    <location>
        <begin position="242"/>
        <end position="245"/>
    </location>
</feature>
<feature type="strand" evidence="2">
    <location>
        <begin position="258"/>
        <end position="260"/>
    </location>
</feature>
<feature type="helix" evidence="2">
    <location>
        <begin position="261"/>
        <end position="274"/>
    </location>
</feature>
<sequence length="409" mass="46691">MLMNIVTLISWDFKRNNESFQRAIINGYDYWSRILDDHGVEKYVILLTCNRVELYYRGDPFDVQEKGYNIISDDMAINHLFHVAAGLDSMSIGENEVLKQVKQAYEKSSSMGKSDKFLSLIFQRAISVGKLVRSKTGIGKGKVSIPSIVYDIVRKNGGNKILLVGNGMLASEIAPYFSYPQYKVTVAGRNIDHVRAFAEKYEYEYVLINDIDSLIKNNDVIITATSSKTPIVEERSLMPGKLFIDLGNPPNIERGNNVITLDEIYEISKKNEMLREEKINQAEILIENEMKATMNKIKDLMIDDIFSQFYRFASVVQTMEIQKFRKMHPEVNENDLEALAHSIINKILNVPVTTLKAVSRSQGNSDFNRLFESFSSNFNDIVSAALQSYEGLRDTQSLRDRTRQLLQKS</sequence>
<organism>
    <name type="scientific">Thermoplasma volcanium (strain ATCC 51530 / DSM 4299 / JCM 9571 / NBRC 15438 / GSS1)</name>
    <dbReference type="NCBI Taxonomy" id="273116"/>
    <lineage>
        <taxon>Archaea</taxon>
        <taxon>Methanobacteriati</taxon>
        <taxon>Thermoplasmatota</taxon>
        <taxon>Thermoplasmata</taxon>
        <taxon>Thermoplasmatales</taxon>
        <taxon>Thermoplasmataceae</taxon>
        <taxon>Thermoplasma</taxon>
    </lineage>
</organism>
<dbReference type="EC" id="1.2.1.70" evidence="1"/>
<dbReference type="EMBL" id="BA000011">
    <property type="protein sequence ID" value="BAB59732.1"/>
    <property type="molecule type" value="Genomic_DNA"/>
</dbReference>
<dbReference type="PDB" id="3OJ0">
    <property type="method" value="X-ray"/>
    <property type="resolution" value="1.65 A"/>
    <property type="chains" value="A=141-281"/>
</dbReference>
<dbReference type="PDBsum" id="3OJ0"/>
<dbReference type="SMR" id="Q97B68"/>
<dbReference type="STRING" id="273116.gene:9381378"/>
<dbReference type="PaxDb" id="273116-14324805"/>
<dbReference type="DNASU" id="1441696"/>
<dbReference type="KEGG" id="tvo:TVG0579613"/>
<dbReference type="eggNOG" id="arCOG01036">
    <property type="taxonomic scope" value="Archaea"/>
</dbReference>
<dbReference type="HOGENOM" id="CLU_035113_2_2_2"/>
<dbReference type="PhylomeDB" id="Q97B68"/>
<dbReference type="UniPathway" id="UPA00251">
    <property type="reaction ID" value="UER00316"/>
</dbReference>
<dbReference type="EvolutionaryTrace" id="Q97B68"/>
<dbReference type="Proteomes" id="UP000001017">
    <property type="component" value="Chromosome"/>
</dbReference>
<dbReference type="GO" id="GO:0008883">
    <property type="term" value="F:glutamyl-tRNA reductase activity"/>
    <property type="evidence" value="ECO:0007669"/>
    <property type="project" value="UniProtKB-UniRule"/>
</dbReference>
<dbReference type="GO" id="GO:0050661">
    <property type="term" value="F:NADP binding"/>
    <property type="evidence" value="ECO:0007669"/>
    <property type="project" value="InterPro"/>
</dbReference>
<dbReference type="GO" id="GO:0019353">
    <property type="term" value="P:protoporphyrinogen IX biosynthetic process from glutamate"/>
    <property type="evidence" value="ECO:0007669"/>
    <property type="project" value="TreeGrafter"/>
</dbReference>
<dbReference type="Gene3D" id="3.30.460.30">
    <property type="entry name" value="Glutamyl-tRNA reductase, N-terminal domain"/>
    <property type="match status" value="1"/>
</dbReference>
<dbReference type="Gene3D" id="3.40.50.720">
    <property type="entry name" value="NAD(P)-binding Rossmann-like Domain"/>
    <property type="match status" value="1"/>
</dbReference>
<dbReference type="HAMAP" id="MF_00087">
    <property type="entry name" value="Glu_tRNA_reductase"/>
    <property type="match status" value="1"/>
</dbReference>
<dbReference type="InterPro" id="IPR000343">
    <property type="entry name" value="4pyrrol_synth_GluRdtase"/>
</dbReference>
<dbReference type="InterPro" id="IPR015896">
    <property type="entry name" value="4pyrrol_synth_GluRdtase_dimer"/>
</dbReference>
<dbReference type="InterPro" id="IPR015895">
    <property type="entry name" value="4pyrrol_synth_GluRdtase_N"/>
</dbReference>
<dbReference type="InterPro" id="IPR018214">
    <property type="entry name" value="GluRdtase_CS"/>
</dbReference>
<dbReference type="InterPro" id="IPR036453">
    <property type="entry name" value="GluRdtase_dimer_dom_sf"/>
</dbReference>
<dbReference type="InterPro" id="IPR036343">
    <property type="entry name" value="GluRdtase_N_sf"/>
</dbReference>
<dbReference type="InterPro" id="IPR036291">
    <property type="entry name" value="NAD(P)-bd_dom_sf"/>
</dbReference>
<dbReference type="InterPro" id="IPR006151">
    <property type="entry name" value="Shikm_DH/Glu-tRNA_Rdtase"/>
</dbReference>
<dbReference type="PANTHER" id="PTHR43013">
    <property type="entry name" value="GLUTAMYL-TRNA REDUCTASE"/>
    <property type="match status" value="1"/>
</dbReference>
<dbReference type="PANTHER" id="PTHR43013:SF1">
    <property type="entry name" value="GLUTAMYL-TRNA REDUCTASE"/>
    <property type="match status" value="1"/>
</dbReference>
<dbReference type="Pfam" id="PF00745">
    <property type="entry name" value="GlutR_dimer"/>
    <property type="match status" value="1"/>
</dbReference>
<dbReference type="Pfam" id="PF05201">
    <property type="entry name" value="GlutR_N"/>
    <property type="match status" value="1"/>
</dbReference>
<dbReference type="Pfam" id="PF01488">
    <property type="entry name" value="Shikimate_DH"/>
    <property type="match status" value="1"/>
</dbReference>
<dbReference type="PIRSF" id="PIRSF000445">
    <property type="entry name" value="4pyrrol_synth_GluRdtase"/>
    <property type="match status" value="1"/>
</dbReference>
<dbReference type="SUPFAM" id="SSF69742">
    <property type="entry name" value="Glutamyl tRNA-reductase catalytic, N-terminal domain"/>
    <property type="match status" value="1"/>
</dbReference>
<dbReference type="SUPFAM" id="SSF69075">
    <property type="entry name" value="Glutamyl tRNA-reductase dimerization domain"/>
    <property type="match status" value="1"/>
</dbReference>
<dbReference type="SUPFAM" id="SSF51735">
    <property type="entry name" value="NAD(P)-binding Rossmann-fold domains"/>
    <property type="match status" value="1"/>
</dbReference>
<dbReference type="PROSITE" id="PS00747">
    <property type="entry name" value="GLUTR"/>
    <property type="match status" value="1"/>
</dbReference>
<accession>Q97B68</accession>
<keyword id="KW-0002">3D-structure</keyword>
<keyword id="KW-0521">NADP</keyword>
<keyword id="KW-0560">Oxidoreductase</keyword>
<keyword id="KW-0627">Porphyrin biosynthesis</keyword>
<evidence type="ECO:0000255" key="1">
    <source>
        <dbReference type="HAMAP-Rule" id="MF_00087"/>
    </source>
</evidence>
<evidence type="ECO:0007829" key="2">
    <source>
        <dbReference type="PDB" id="3OJ0"/>
    </source>
</evidence>
<protein>
    <recommendedName>
        <fullName evidence="1">Glutamyl-tRNA reductase</fullName>
        <shortName evidence="1">GluTR</shortName>
        <ecNumber evidence="1">1.2.1.70</ecNumber>
    </recommendedName>
</protein>
<comment type="function">
    <text evidence="1">Catalyzes the NADPH-dependent reduction of glutamyl-tRNA(Glu) to glutamate 1-semialdehyde (GSA).</text>
</comment>
<comment type="catalytic activity">
    <reaction evidence="1">
        <text>(S)-4-amino-5-oxopentanoate + tRNA(Glu) + NADP(+) = L-glutamyl-tRNA(Glu) + NADPH + H(+)</text>
        <dbReference type="Rhea" id="RHEA:12344"/>
        <dbReference type="Rhea" id="RHEA-COMP:9663"/>
        <dbReference type="Rhea" id="RHEA-COMP:9680"/>
        <dbReference type="ChEBI" id="CHEBI:15378"/>
        <dbReference type="ChEBI" id="CHEBI:57501"/>
        <dbReference type="ChEBI" id="CHEBI:57783"/>
        <dbReference type="ChEBI" id="CHEBI:58349"/>
        <dbReference type="ChEBI" id="CHEBI:78442"/>
        <dbReference type="ChEBI" id="CHEBI:78520"/>
        <dbReference type="EC" id="1.2.1.70"/>
    </reaction>
</comment>
<comment type="pathway">
    <text evidence="1">Porphyrin-containing compound metabolism; protoporphyrin-IX biosynthesis; 5-aminolevulinate from L-glutamyl-tRNA(Glu): step 1/2.</text>
</comment>
<comment type="subunit">
    <text evidence="1">Homodimer.</text>
</comment>
<comment type="domain">
    <text evidence="1">Possesses an unusual extended V-shaped dimeric structure with each monomer consisting of three distinct domains arranged along a curved 'spinal' alpha-helix. The N-terminal catalytic domain specifically recognizes the glutamate moiety of the substrate. The second domain is the NADPH-binding domain, and the third C-terminal domain is responsible for dimerization.</text>
</comment>
<comment type="miscellaneous">
    <text evidence="1">During catalysis, the active site Cys acts as a nucleophile attacking the alpha-carbonyl group of tRNA-bound glutamate with the formation of a thioester intermediate between enzyme and glutamate, and the concomitant release of tRNA(Glu). The thioester intermediate is finally reduced by direct hydride transfer from NADPH, to form the product GSA.</text>
</comment>
<comment type="similarity">
    <text evidence="1">Belongs to the glutamyl-tRNA reductase family.</text>
</comment>